<gene>
    <name type="primary">CHLI</name>
</gene>
<proteinExistence type="evidence at transcript level"/>
<organism>
    <name type="scientific">Chlamydomonas reinhardtii</name>
    <name type="common">Chlamydomonas smithii</name>
    <dbReference type="NCBI Taxonomy" id="3055"/>
    <lineage>
        <taxon>Eukaryota</taxon>
        <taxon>Viridiplantae</taxon>
        <taxon>Chlorophyta</taxon>
        <taxon>core chlorophytes</taxon>
        <taxon>Chlorophyceae</taxon>
        <taxon>CS clade</taxon>
        <taxon>Chlamydomonadales</taxon>
        <taxon>Chlamydomonadaceae</taxon>
        <taxon>Chlamydomonas</taxon>
    </lineage>
</organism>
<dbReference type="EC" id="6.6.1.1"/>
<dbReference type="EMBL" id="AF343974">
    <property type="protein sequence ID" value="AAK69657.1"/>
    <property type="molecule type" value="mRNA"/>
</dbReference>
<dbReference type="SMR" id="Q94FT3"/>
<dbReference type="PaxDb" id="3055-EDP04965"/>
<dbReference type="ProMEX" id="Q94FT3"/>
<dbReference type="eggNOG" id="ENOG502QRUY">
    <property type="taxonomic scope" value="Eukaryota"/>
</dbReference>
<dbReference type="BRENDA" id="6.6.1.1">
    <property type="organism ID" value="1318"/>
</dbReference>
<dbReference type="UniPathway" id="UPA00668"/>
<dbReference type="GO" id="GO:0009507">
    <property type="term" value="C:chloroplast"/>
    <property type="evidence" value="ECO:0007669"/>
    <property type="project" value="UniProtKB-SubCell"/>
</dbReference>
<dbReference type="GO" id="GO:0005524">
    <property type="term" value="F:ATP binding"/>
    <property type="evidence" value="ECO:0007669"/>
    <property type="project" value="UniProtKB-KW"/>
</dbReference>
<dbReference type="GO" id="GO:0016887">
    <property type="term" value="F:ATP hydrolysis activity"/>
    <property type="evidence" value="ECO:0007669"/>
    <property type="project" value="InterPro"/>
</dbReference>
<dbReference type="GO" id="GO:0016851">
    <property type="term" value="F:magnesium chelatase activity"/>
    <property type="evidence" value="ECO:0007669"/>
    <property type="project" value="UniProtKB-EC"/>
</dbReference>
<dbReference type="GO" id="GO:0015995">
    <property type="term" value="P:chlorophyll biosynthetic process"/>
    <property type="evidence" value="ECO:0007669"/>
    <property type="project" value="UniProtKB-UniPathway"/>
</dbReference>
<dbReference type="GO" id="GO:0015979">
    <property type="term" value="P:photosynthesis"/>
    <property type="evidence" value="ECO:0007669"/>
    <property type="project" value="UniProtKB-KW"/>
</dbReference>
<dbReference type="CDD" id="cd00009">
    <property type="entry name" value="AAA"/>
    <property type="match status" value="1"/>
</dbReference>
<dbReference type="FunFam" id="1.10.8.80:FF:000001">
    <property type="entry name" value="Mg-protoporphyrin IX chelatase"/>
    <property type="match status" value="1"/>
</dbReference>
<dbReference type="FunFam" id="3.40.50.300:FF:000601">
    <property type="entry name" value="Mg-protoporphyrin IX chelatase"/>
    <property type="match status" value="1"/>
</dbReference>
<dbReference type="Gene3D" id="1.10.8.80">
    <property type="entry name" value="Magnesium chelatase subunit I, C-Terminal domain"/>
    <property type="match status" value="1"/>
</dbReference>
<dbReference type="Gene3D" id="3.40.50.300">
    <property type="entry name" value="P-loop containing nucleotide triphosphate hydrolases"/>
    <property type="match status" value="1"/>
</dbReference>
<dbReference type="InterPro" id="IPR003593">
    <property type="entry name" value="AAA+_ATPase"/>
</dbReference>
<dbReference type="InterPro" id="IPR045006">
    <property type="entry name" value="CHLI-like"/>
</dbReference>
<dbReference type="InterPro" id="IPR041628">
    <property type="entry name" value="ChlI/MoxR_AAA_lid"/>
</dbReference>
<dbReference type="InterPro" id="IPR011775">
    <property type="entry name" value="Mg_chelatase_ATPase-isu"/>
</dbReference>
<dbReference type="InterPro" id="IPR000523">
    <property type="entry name" value="Mg_chelatse_chII-like_cat_dom"/>
</dbReference>
<dbReference type="InterPro" id="IPR027417">
    <property type="entry name" value="P-loop_NTPase"/>
</dbReference>
<dbReference type="NCBIfam" id="TIGR02030">
    <property type="entry name" value="BchI-ChlI"/>
    <property type="match status" value="1"/>
</dbReference>
<dbReference type="PANTHER" id="PTHR32039">
    <property type="entry name" value="MAGNESIUM-CHELATASE SUBUNIT CHLI"/>
    <property type="match status" value="1"/>
</dbReference>
<dbReference type="PANTHER" id="PTHR32039:SF9">
    <property type="entry name" value="MAGNESIUM-CHELATASE SUBUNIT CHLI-2, CHLOROPLASTIC"/>
    <property type="match status" value="1"/>
</dbReference>
<dbReference type="Pfam" id="PF17863">
    <property type="entry name" value="AAA_lid_2"/>
    <property type="match status" value="1"/>
</dbReference>
<dbReference type="Pfam" id="PF01078">
    <property type="entry name" value="Mg_chelatase"/>
    <property type="match status" value="1"/>
</dbReference>
<dbReference type="SMART" id="SM00382">
    <property type="entry name" value="AAA"/>
    <property type="match status" value="1"/>
</dbReference>
<dbReference type="SUPFAM" id="SSF52540">
    <property type="entry name" value="P-loop containing nucleoside triphosphate hydrolases"/>
    <property type="match status" value="1"/>
</dbReference>
<sequence>MALNMRVSSSKVAAKQQGRISAVPVVSSKVASSARVAPFQGAPVAAQRAALLVRAAAATEVKAAEGRTGKELGQARPIFPFTAIVGQDEMKLALILNVIDPKIGGVMIMGDRGTGKSTTIRALADLLPEMQVVANDPFNSDPTDPELMSEEVRNRVKAGEQLPVSSKKIPMVDLPLGATEDRVCGTIDIEKALTEGVKAFEPGLLAKANRGILYVDEVNLLDDHLVDVLLDSAASGWNTVEREGISISHPARFILVGSGNPEEGELRPQLLDRFGMHAQIGTVKDPRLRVQIVSQRSTFDENPAAFRKDYEAGQMALTQRIVDARKLLKQGEVNYDFRVKISQICSDLNVDGIRGDIVTNRAAKALAAFEGRTEVTPEDIYRVIPLCLRHRLRKDPLAEIDDGDRVREIFKQVFGME</sequence>
<comment type="function">
    <text evidence="1">Involved in chlorophyll biosynthesis. Catalyzes the insertion of magnesium ion into protoporphyrin IX to yield Mg-protoporphyrin IX. The magnesium-chelatase is a complex of three subunits, CHLI, CHLD and CHLH. The reaction takes place in two steps, with an ATP-dependent activation followed by an ATP-dependent chelation step (By similarity).</text>
</comment>
<comment type="catalytic activity">
    <reaction>
        <text>protoporphyrin IX + Mg(2+) + ATP + H2O = Mg-protoporphyrin IX + ADP + phosphate + 3 H(+)</text>
        <dbReference type="Rhea" id="RHEA:13961"/>
        <dbReference type="ChEBI" id="CHEBI:15377"/>
        <dbReference type="ChEBI" id="CHEBI:15378"/>
        <dbReference type="ChEBI" id="CHEBI:18420"/>
        <dbReference type="ChEBI" id="CHEBI:30616"/>
        <dbReference type="ChEBI" id="CHEBI:43474"/>
        <dbReference type="ChEBI" id="CHEBI:57306"/>
        <dbReference type="ChEBI" id="CHEBI:60492"/>
        <dbReference type="ChEBI" id="CHEBI:456216"/>
        <dbReference type="EC" id="6.6.1.1"/>
    </reaction>
</comment>
<comment type="activity regulation">
    <text evidence="1">Redox regulation; active in reducing conditions, inactive in oxidizing conditions. Thioredoxins f and m mediate the reversible reductive activation of oxidized CHLI (By similarity).</text>
</comment>
<comment type="pathway">
    <text>Porphyrin-containing compound metabolism; chlorophyll biosynthesis.</text>
</comment>
<comment type="subunit">
    <text>The magnesium chelatase complex is a heterotrimer consisting of subunits CHLI, CHLD and CHLH.</text>
</comment>
<comment type="subcellular location">
    <subcellularLocation>
        <location evidence="3">Plastid</location>
        <location evidence="3">Chloroplast</location>
    </subcellularLocation>
</comment>
<comment type="similarity">
    <text evidence="3">Belongs to the Mg-chelatase subunits D/I family.</text>
</comment>
<keyword id="KW-0067">ATP-binding</keyword>
<keyword id="KW-0149">Chlorophyll biosynthesis</keyword>
<keyword id="KW-0150">Chloroplast</keyword>
<keyword id="KW-1015">Disulfide bond</keyword>
<keyword id="KW-0436">Ligase</keyword>
<keyword id="KW-0547">Nucleotide-binding</keyword>
<keyword id="KW-0602">Photosynthesis</keyword>
<keyword id="KW-0934">Plastid</keyword>
<keyword id="KW-0809">Transit peptide</keyword>
<accession>Q94FT3</accession>
<feature type="transit peptide" description="Chloroplast" evidence="2">
    <location>
        <begin position="1"/>
        <end position="54"/>
    </location>
</feature>
<feature type="chain" id="PRO_0000002802" description="Magnesium-chelatase subunit ChlI, chloroplastic">
    <location>
        <begin position="55"/>
        <end position="417"/>
    </location>
</feature>
<feature type="binding site" evidence="2">
    <location>
        <begin position="110"/>
        <end position="117"/>
    </location>
    <ligand>
        <name>ATP</name>
        <dbReference type="ChEBI" id="CHEBI:30616"/>
    </ligand>
</feature>
<feature type="disulfide bond" description="Inhibitory under oxidizing conditions" evidence="1">
    <location>
        <begin position="345"/>
        <end position="387"/>
    </location>
</feature>
<reference key="1">
    <citation type="submission" date="2001-01" db="EMBL/GenBank/DDBJ databases">
        <title>Magnesium chelatase genes in Chlamydomonas reinhardtii are co-ordinately regulated.</title>
        <authorList>
            <person name="Lake V."/>
            <person name="Willows R.D."/>
        </authorList>
    </citation>
    <scope>NUCLEOTIDE SEQUENCE [MRNA]</scope>
    <source>
        <strain>CC-124</strain>
    </source>
</reference>
<protein>
    <recommendedName>
        <fullName>Magnesium-chelatase subunit ChlI, chloroplastic</fullName>
        <shortName>Mg-chelatase subunit I-1</shortName>
        <ecNumber>6.6.1.1</ecNumber>
    </recommendedName>
    <alternativeName>
        <fullName>Mg-protoporphyrin IX chelatase subunit ChlI</fullName>
    </alternativeName>
</protein>
<evidence type="ECO:0000250" key="1"/>
<evidence type="ECO:0000255" key="2"/>
<evidence type="ECO:0000305" key="3"/>
<name>CHLI_CHLRE</name>